<proteinExistence type="uncertain"/>
<gene>
    <name type="ordered locus">YNL228W</name>
    <name type="ORF">N1249</name>
</gene>
<protein>
    <recommendedName>
        <fullName>putative uncharacterized membrane protein YNL228W</fullName>
    </recommendedName>
</protein>
<dbReference type="EMBL" id="Z69381">
    <property type="protein sequence ID" value="CAA93370.1"/>
    <property type="molecule type" value="Genomic_DNA"/>
</dbReference>
<dbReference type="EMBL" id="Z71504">
    <property type="protein sequence ID" value="CAA96131.1"/>
    <property type="molecule type" value="Genomic_DNA"/>
</dbReference>
<dbReference type="PIR" id="S63194">
    <property type="entry name" value="S63194"/>
</dbReference>
<dbReference type="SMR" id="P53862"/>
<dbReference type="DIP" id="DIP-4282N"/>
<dbReference type="IntAct" id="P53862">
    <property type="interactions" value="1"/>
</dbReference>
<dbReference type="PaxDb" id="4932-YNL228W"/>
<dbReference type="EnsemblFungi" id="YNL228W_mRNA">
    <property type="protein sequence ID" value="YNL228W"/>
    <property type="gene ID" value="YNL228W"/>
</dbReference>
<dbReference type="AGR" id="SGD:S000005172"/>
<dbReference type="SGD" id="S000005172">
    <property type="gene designation" value="YNL228W"/>
</dbReference>
<dbReference type="HOGENOM" id="CLU_1078504_0_0_1"/>
<dbReference type="GO" id="GO:0016020">
    <property type="term" value="C:membrane"/>
    <property type="evidence" value="ECO:0007669"/>
    <property type="project" value="UniProtKB-SubCell"/>
</dbReference>
<organism>
    <name type="scientific">Saccharomyces cerevisiae (strain ATCC 204508 / S288c)</name>
    <name type="common">Baker's yeast</name>
    <dbReference type="NCBI Taxonomy" id="559292"/>
    <lineage>
        <taxon>Eukaryota</taxon>
        <taxon>Fungi</taxon>
        <taxon>Dikarya</taxon>
        <taxon>Ascomycota</taxon>
        <taxon>Saccharomycotina</taxon>
        <taxon>Saccharomycetes</taxon>
        <taxon>Saccharomycetales</taxon>
        <taxon>Saccharomycetaceae</taxon>
        <taxon>Saccharomyces</taxon>
    </lineage>
</organism>
<accession>P53862</accession>
<feature type="signal peptide" evidence="1">
    <location>
        <begin position="1"/>
        <end position="23"/>
    </location>
</feature>
<feature type="chain" id="PRO_0000014339" description="putative uncharacterized membrane protein YNL228W">
    <location>
        <begin position="24"/>
        <end position="258"/>
    </location>
</feature>
<feature type="topological domain" description="Cytoplasmic" evidence="1">
    <location>
        <begin position="24"/>
        <end position="64"/>
    </location>
</feature>
<feature type="transmembrane region" description="Helical" evidence="1">
    <location>
        <begin position="65"/>
        <end position="85"/>
    </location>
</feature>
<feature type="topological domain" description="Extracellular" evidence="1">
    <location>
        <begin position="86"/>
        <end position="123"/>
    </location>
</feature>
<feature type="transmembrane region" description="Helical" evidence="1">
    <location>
        <begin position="124"/>
        <end position="144"/>
    </location>
</feature>
<feature type="topological domain" description="Cytoplasmic" evidence="1">
    <location>
        <begin position="145"/>
        <end position="230"/>
    </location>
</feature>
<feature type="transmembrane region" description="Helical" evidence="1">
    <location>
        <begin position="231"/>
        <end position="251"/>
    </location>
</feature>
<feature type="topological domain" description="Extracellular" evidence="1">
    <location>
        <begin position="252"/>
        <end position="258"/>
    </location>
</feature>
<feature type="glycosylation site" description="N-linked (GlcNAc...) asparagine" evidence="1">
    <location>
        <position position="118"/>
    </location>
</feature>
<keyword id="KW-0325">Glycoprotein</keyword>
<keyword id="KW-0472">Membrane</keyword>
<keyword id="KW-0732">Signal</keyword>
<keyword id="KW-0812">Transmembrane</keyword>
<keyword id="KW-1133">Transmembrane helix</keyword>
<reference key="1">
    <citation type="journal article" date="1996" name="Yeast">
        <title>The DNA sequence of cosmid 14-5 from chromosome XIV reveals 21 open reading frames including a novel gene encoding a globin-like domain.</title>
        <authorList>
            <person name="Pandolfo D."/>
            <person name="de Antoni A."/>
            <person name="Lanfranchi G."/>
            <person name="Valle G."/>
        </authorList>
    </citation>
    <scope>NUCLEOTIDE SEQUENCE [GENOMIC DNA]</scope>
</reference>
<reference key="2">
    <citation type="journal article" date="1997" name="Nature">
        <title>The nucleotide sequence of Saccharomyces cerevisiae chromosome XIV and its evolutionary implications.</title>
        <authorList>
            <person name="Philippsen P."/>
            <person name="Kleine K."/>
            <person name="Poehlmann R."/>
            <person name="Duesterhoeft A."/>
            <person name="Hamberg K."/>
            <person name="Hegemann J.H."/>
            <person name="Obermaier B."/>
            <person name="Urrestarazu L.A."/>
            <person name="Aert R."/>
            <person name="Albermann K."/>
            <person name="Altmann R."/>
            <person name="Andre B."/>
            <person name="Baladron V."/>
            <person name="Ballesta J.P.G."/>
            <person name="Becam A.-M."/>
            <person name="Beinhauer J.D."/>
            <person name="Boskovic J."/>
            <person name="Buitrago M.J."/>
            <person name="Bussereau F."/>
            <person name="Coster F."/>
            <person name="Crouzet M."/>
            <person name="D'Angelo M."/>
            <person name="Dal Pero F."/>
            <person name="De Antoni A."/>
            <person name="del Rey F."/>
            <person name="Doignon F."/>
            <person name="Domdey H."/>
            <person name="Dubois E."/>
            <person name="Fiedler T.A."/>
            <person name="Fleig U."/>
            <person name="Floeth M."/>
            <person name="Fritz C."/>
            <person name="Gaillardin C."/>
            <person name="Garcia-Cantalejo J.M."/>
            <person name="Glansdorff N."/>
            <person name="Goffeau A."/>
            <person name="Gueldener U."/>
            <person name="Herbert C.J."/>
            <person name="Heumann K."/>
            <person name="Heuss-Neitzel D."/>
            <person name="Hilbert H."/>
            <person name="Hinni K."/>
            <person name="Iraqui Houssaini I."/>
            <person name="Jacquet M."/>
            <person name="Jimenez A."/>
            <person name="Jonniaux J.-L."/>
            <person name="Karpfinger-Hartl L."/>
            <person name="Lanfranchi G."/>
            <person name="Lepingle A."/>
            <person name="Levesque H."/>
            <person name="Lyck R."/>
            <person name="Maftahi M."/>
            <person name="Mallet L."/>
            <person name="Maurer C.T.C."/>
            <person name="Messenguy F."/>
            <person name="Mewes H.-W."/>
            <person name="Moestl D."/>
            <person name="Nasr F."/>
            <person name="Nicaud J.-M."/>
            <person name="Niedenthal R.K."/>
            <person name="Pandolfo D."/>
            <person name="Pierard A."/>
            <person name="Piravandi E."/>
            <person name="Planta R.J."/>
            <person name="Pohl T.M."/>
            <person name="Purnelle B."/>
            <person name="Rebischung C."/>
            <person name="Remacha M.A."/>
            <person name="Revuelta J.L."/>
            <person name="Rinke M."/>
            <person name="Saiz J.E."/>
            <person name="Sartorello F."/>
            <person name="Scherens B."/>
            <person name="Sen-Gupta M."/>
            <person name="Soler-Mira A."/>
            <person name="Urbanus J.H.M."/>
            <person name="Valle G."/>
            <person name="Van Dyck L."/>
            <person name="Verhasselt P."/>
            <person name="Vierendeels F."/>
            <person name="Vissers S."/>
            <person name="Voet M."/>
            <person name="Volckaert G."/>
            <person name="Wach A."/>
            <person name="Wambutt R."/>
            <person name="Wedler H."/>
            <person name="Zollner A."/>
            <person name="Hani J."/>
        </authorList>
    </citation>
    <scope>NUCLEOTIDE SEQUENCE [LARGE SCALE GENOMIC DNA]</scope>
    <source>
        <strain>ATCC 204508 / S288c</strain>
    </source>
</reference>
<reference key="3">
    <citation type="journal article" date="2014" name="G3 (Bethesda)">
        <title>The reference genome sequence of Saccharomyces cerevisiae: Then and now.</title>
        <authorList>
            <person name="Engel S.R."/>
            <person name="Dietrich F.S."/>
            <person name="Fisk D.G."/>
            <person name="Binkley G."/>
            <person name="Balakrishnan R."/>
            <person name="Costanzo M.C."/>
            <person name="Dwight S.S."/>
            <person name="Hitz B.C."/>
            <person name="Karra K."/>
            <person name="Nash R.S."/>
            <person name="Weng S."/>
            <person name="Wong E.D."/>
            <person name="Lloyd P."/>
            <person name="Skrzypek M.S."/>
            <person name="Miyasato S.R."/>
            <person name="Simison M."/>
            <person name="Cherry J.M."/>
        </authorList>
    </citation>
    <scope>GENOME REANNOTATION</scope>
    <source>
        <strain>ATCC 204508 / S288c</strain>
    </source>
</reference>
<reference key="4">
    <citation type="journal article" date="2006" name="Proc. Natl. Acad. Sci. U.S.A.">
        <title>A global topology map of the Saccharomyces cerevisiae membrane proteome.</title>
        <authorList>
            <person name="Kim H."/>
            <person name="Melen K."/>
            <person name="Oesterberg M."/>
            <person name="von Heijne G."/>
        </authorList>
    </citation>
    <scope>TOPOLOGY [LARGE SCALE ANALYSIS]</scope>
    <source>
        <strain>ATCC 208353 / W303-1A</strain>
    </source>
</reference>
<sequence>MVWCHYILLVLTFFLFTTFFTAACPAIFTWLNSLFRLSNDSPHVVHTSIAEVGDIEDGRVDKDGVLFVDLEFFLGCLPFFFFALVDQSSSSSVCKPLSPSDAKRSSNSLLRLSLVSSNDSDSSVSVSTFAFFFFFLFFLFFVFTCTFSSELTSSTSISISMLRLSSSLSSSEDDSASFLSISASSACNACRSISSFSLTLSSAESNFSRSERLSNPSVMFSSSISFRISSIFFLCSLVFMWFFNCFSDLNVLLQIKHS</sequence>
<comment type="subcellular location">
    <subcellularLocation>
        <location>Membrane</location>
        <topology>Multi-pass membrane protein</topology>
    </subcellularLocation>
</comment>
<comment type="miscellaneous">
    <text evidence="2">Almost completely overlaps JJJ1.</text>
</comment>
<comment type="caution">
    <text evidence="3">Product of a dubious gene prediction unlikely to encode a functional protein. Because of that it is not part of the S.cerevisiae S288c complete/reference proteome set.</text>
</comment>
<evidence type="ECO:0000255" key="1"/>
<evidence type="ECO:0000305" key="2"/>
<evidence type="ECO:0000305" key="3">
    <source>
    </source>
</evidence>
<name>YNW8_YEAST</name>